<reference key="1">
    <citation type="journal article" date="2002" name="Nature">
        <title>The genome sequence of Schizosaccharomyces pombe.</title>
        <authorList>
            <person name="Wood V."/>
            <person name="Gwilliam R."/>
            <person name="Rajandream M.A."/>
            <person name="Lyne M.H."/>
            <person name="Lyne R."/>
            <person name="Stewart A."/>
            <person name="Sgouros J.G."/>
            <person name="Peat N."/>
            <person name="Hayles J."/>
            <person name="Baker S.G."/>
            <person name="Basham D."/>
            <person name="Bowman S."/>
            <person name="Brooks K."/>
            <person name="Brown D."/>
            <person name="Brown S."/>
            <person name="Chillingworth T."/>
            <person name="Churcher C.M."/>
            <person name="Collins M."/>
            <person name="Connor R."/>
            <person name="Cronin A."/>
            <person name="Davis P."/>
            <person name="Feltwell T."/>
            <person name="Fraser A."/>
            <person name="Gentles S."/>
            <person name="Goble A."/>
            <person name="Hamlin N."/>
            <person name="Harris D.E."/>
            <person name="Hidalgo J."/>
            <person name="Hodgson G."/>
            <person name="Holroyd S."/>
            <person name="Hornsby T."/>
            <person name="Howarth S."/>
            <person name="Huckle E.J."/>
            <person name="Hunt S."/>
            <person name="Jagels K."/>
            <person name="James K.D."/>
            <person name="Jones L."/>
            <person name="Jones M."/>
            <person name="Leather S."/>
            <person name="McDonald S."/>
            <person name="McLean J."/>
            <person name="Mooney P."/>
            <person name="Moule S."/>
            <person name="Mungall K.L."/>
            <person name="Murphy L.D."/>
            <person name="Niblett D."/>
            <person name="Odell C."/>
            <person name="Oliver K."/>
            <person name="O'Neil S."/>
            <person name="Pearson D."/>
            <person name="Quail M.A."/>
            <person name="Rabbinowitsch E."/>
            <person name="Rutherford K.M."/>
            <person name="Rutter S."/>
            <person name="Saunders D."/>
            <person name="Seeger K."/>
            <person name="Sharp S."/>
            <person name="Skelton J."/>
            <person name="Simmonds M.N."/>
            <person name="Squares R."/>
            <person name="Squares S."/>
            <person name="Stevens K."/>
            <person name="Taylor K."/>
            <person name="Taylor R.G."/>
            <person name="Tivey A."/>
            <person name="Walsh S.V."/>
            <person name="Warren T."/>
            <person name="Whitehead S."/>
            <person name="Woodward J.R."/>
            <person name="Volckaert G."/>
            <person name="Aert R."/>
            <person name="Robben J."/>
            <person name="Grymonprez B."/>
            <person name="Weltjens I."/>
            <person name="Vanstreels E."/>
            <person name="Rieger M."/>
            <person name="Schaefer M."/>
            <person name="Mueller-Auer S."/>
            <person name="Gabel C."/>
            <person name="Fuchs M."/>
            <person name="Duesterhoeft A."/>
            <person name="Fritzc C."/>
            <person name="Holzer E."/>
            <person name="Moestl D."/>
            <person name="Hilbert H."/>
            <person name="Borzym K."/>
            <person name="Langer I."/>
            <person name="Beck A."/>
            <person name="Lehrach H."/>
            <person name="Reinhardt R."/>
            <person name="Pohl T.M."/>
            <person name="Eger P."/>
            <person name="Zimmermann W."/>
            <person name="Wedler H."/>
            <person name="Wambutt R."/>
            <person name="Purnelle B."/>
            <person name="Goffeau A."/>
            <person name="Cadieu E."/>
            <person name="Dreano S."/>
            <person name="Gloux S."/>
            <person name="Lelaure V."/>
            <person name="Mottier S."/>
            <person name="Galibert F."/>
            <person name="Aves S.J."/>
            <person name="Xiang Z."/>
            <person name="Hunt C."/>
            <person name="Moore K."/>
            <person name="Hurst S.M."/>
            <person name="Lucas M."/>
            <person name="Rochet M."/>
            <person name="Gaillardin C."/>
            <person name="Tallada V.A."/>
            <person name="Garzon A."/>
            <person name="Thode G."/>
            <person name="Daga R.R."/>
            <person name="Cruzado L."/>
            <person name="Jimenez J."/>
            <person name="Sanchez M."/>
            <person name="del Rey F."/>
            <person name="Benito J."/>
            <person name="Dominguez A."/>
            <person name="Revuelta J.L."/>
            <person name="Moreno S."/>
            <person name="Armstrong J."/>
            <person name="Forsburg S.L."/>
            <person name="Cerutti L."/>
            <person name="Lowe T."/>
            <person name="McCombie W.R."/>
            <person name="Paulsen I."/>
            <person name="Potashkin J."/>
            <person name="Shpakovski G.V."/>
            <person name="Ussery D."/>
            <person name="Barrell B.G."/>
            <person name="Nurse P."/>
        </authorList>
    </citation>
    <scope>NUCLEOTIDE SEQUENCE [LARGE SCALE GENOMIC DNA]</scope>
    <source>
        <strain>972 / ATCC 24843</strain>
    </source>
</reference>
<protein>
    <recommendedName>
        <fullName evidence="4">Peroxisome assembly protein 12</fullName>
    </recommendedName>
    <alternativeName>
        <fullName evidence="4">Peroxin-12</fullName>
    </alternativeName>
</protein>
<accession>Q8TFH8</accession>
<gene>
    <name type="primary">pex12</name>
    <name type="ORF">SPAPB17E12.03</name>
</gene>
<sequence>MDSPSLLEVLQVQQVEKLISPSLRFILAYFTHRYPRFLLRAYNSFDGIYLLVKLLLEKSQLKKWNATSVERRFQLKRVIAVRDSSIIAEEFPQESESATSLNGIDVLKKLFLTYCIPYLLEKCESLTTVKENHTAVSILSLQARDKQKGALSVFYSKIKILLVRLKKILHFVFRLIRKSNTYLQWLYYLLYALGKTPYTNLADHILRQRVIYNVENIHSRKLISTREKSSLLTSIADHSMEGFLIIIQLIDWWQSNNYESHLKKGEVAFTELAPPKLPFEINVSTTDICKICGEKIKNPAVLSTGFVFCYPCIQVWLQRHPFKCPVTNLELSRKGESFWRLMI</sequence>
<feature type="chain" id="PRO_0000339876" description="Peroxisome assembly protein 12">
    <location>
        <begin position="1"/>
        <end position="343"/>
    </location>
</feature>
<feature type="topological domain" description="Peroxisomal matrix" evidence="1">
    <location>
        <begin position="1"/>
        <end position="5"/>
    </location>
</feature>
<feature type="transmembrane region" description="Helical; Name=TM1" evidence="1">
    <location>
        <begin position="6"/>
        <end position="33"/>
    </location>
</feature>
<feature type="topological domain" description="Cytoplasmic" evidence="1">
    <location>
        <begin position="34"/>
        <end position="37"/>
    </location>
</feature>
<feature type="transmembrane region" description="Helical; Name=TM2" evidence="1">
    <location>
        <begin position="38"/>
        <end position="62"/>
    </location>
</feature>
<feature type="topological domain" description="Peroxisomal matrix" evidence="1">
    <location>
        <begin position="63"/>
        <end position="102"/>
    </location>
</feature>
<feature type="transmembrane region" description="Helical; Name=TM3" evidence="1">
    <location>
        <begin position="103"/>
        <end position="140"/>
    </location>
</feature>
<feature type="topological domain" description="Cytoplasmic" evidence="1">
    <location>
        <begin position="141"/>
        <end position="146"/>
    </location>
</feature>
<feature type="transmembrane region" description="Helical; Name=TM4" evidence="1">
    <location>
        <begin position="147"/>
        <end position="193"/>
    </location>
</feature>
<feature type="topological domain" description="Peroxisomal matrix" evidence="1">
    <location>
        <begin position="194"/>
        <end position="238"/>
    </location>
</feature>
<feature type="transmembrane region" description="Helical; Name=TM5" evidence="1">
    <location>
        <begin position="239"/>
        <end position="266"/>
    </location>
</feature>
<feature type="topological domain" description="Cytoplasmic" evidence="1">
    <location>
        <begin position="267"/>
        <end position="343"/>
    </location>
</feature>
<feature type="zinc finger region" description="RING-type; degenerate">
    <location>
        <begin position="289"/>
        <end position="328"/>
    </location>
</feature>
<feature type="binding site" evidence="1">
    <location>
        <position position="289"/>
    </location>
    <ligand>
        <name>Zn(2+)</name>
        <dbReference type="ChEBI" id="CHEBI:29105"/>
    </ligand>
</feature>
<feature type="binding site" evidence="1">
    <location>
        <position position="292"/>
    </location>
    <ligand>
        <name>Zn(2+)</name>
        <dbReference type="ChEBI" id="CHEBI:29105"/>
    </ligand>
</feature>
<feature type="binding site" evidence="1">
    <location>
        <position position="309"/>
    </location>
    <ligand>
        <name>Zn(2+)</name>
        <dbReference type="ChEBI" id="CHEBI:29105"/>
    </ligand>
</feature>
<feature type="binding site" evidence="1">
    <location>
        <position position="312"/>
    </location>
    <ligand>
        <name>Zn(2+)</name>
        <dbReference type="ChEBI" id="CHEBI:29105"/>
    </ligand>
</feature>
<evidence type="ECO:0000250" key="1">
    <source>
        <dbReference type="UniProtKB" id="G2Q5N0"/>
    </source>
</evidence>
<evidence type="ECO:0000250" key="2">
    <source>
        <dbReference type="UniProtKB" id="Q04370"/>
    </source>
</evidence>
<evidence type="ECO:0000255" key="3"/>
<evidence type="ECO:0000305" key="4"/>
<name>PEX12_SCHPO</name>
<organism>
    <name type="scientific">Schizosaccharomyces pombe (strain 972 / ATCC 24843)</name>
    <name type="common">Fission yeast</name>
    <dbReference type="NCBI Taxonomy" id="284812"/>
    <lineage>
        <taxon>Eukaryota</taxon>
        <taxon>Fungi</taxon>
        <taxon>Dikarya</taxon>
        <taxon>Ascomycota</taxon>
        <taxon>Taphrinomycotina</taxon>
        <taxon>Schizosaccharomycetes</taxon>
        <taxon>Schizosaccharomycetales</taxon>
        <taxon>Schizosaccharomycetaceae</taxon>
        <taxon>Schizosaccharomyces</taxon>
    </lineage>
</organism>
<comment type="function">
    <text evidence="2">Component of a retrotranslocation channel required for peroxisome organization by mediating export of the PEX5 receptor from peroxisomes to the cytosol, thereby promoting PEX5 recycling. The retrotranslocation channel is composed of PEX2, PEX10 and PEX12; each subunit contributing transmembrane segments that coassemble into an open channel that specifically allows the passage of PEX5 through the peroxisomal membrane. PEX12 also regulates PEX5 recycling by activating the E3 ubiquitin-protein ligase activity of PEX10. When PEX5 recycling is compromised, PEX12 stimulates PEX10-mediated polyubiquitination of PEX5, leading to its subsequent degradation.</text>
</comment>
<comment type="pathway">
    <text evidence="2">Protein modification; protein ubiquitination.</text>
</comment>
<comment type="subunit">
    <text evidence="2">Component of the PEX2-PEX10-PEX12 retrotranslocation channel, composed of PEX2, PEX10 and PEX12.</text>
</comment>
<comment type="subcellular location">
    <subcellularLocation>
        <location evidence="2">Peroxisome membrane</location>
        <topology evidence="3">Multi-pass membrane protein</topology>
    </subcellularLocation>
</comment>
<comment type="domain">
    <text evidence="1">The three subunits of the retrotranslocation channel (PEX2, PEX10 and PEX12) coassemble in the membrane into a channel with an open 10 Angstrom pore. The RING-type zinc-fingers that catalyze PEX5 receptor ubiquitination are positioned above the pore on the cytosolic side of the complex.</text>
</comment>
<comment type="domain">
    <text evidence="2">The RING-type zinc-finger is degenerated and only coordinates one zinc ions, preventing E3 ubiquitin-protein ligase activity.</text>
</comment>
<comment type="similarity">
    <text evidence="4">Belongs to the pex2/pex10/pex12 family.</text>
</comment>
<proteinExistence type="inferred from homology"/>
<dbReference type="EMBL" id="CU329670">
    <property type="protein sequence ID" value="CAD27496.2"/>
    <property type="molecule type" value="Genomic_DNA"/>
</dbReference>
<dbReference type="RefSeq" id="NP_001018219.2">
    <property type="nucleotide sequence ID" value="NM_001018699.3"/>
</dbReference>
<dbReference type="SMR" id="Q8TFH8"/>
<dbReference type="BioGRID" id="280485">
    <property type="interactions" value="1"/>
</dbReference>
<dbReference type="FunCoup" id="Q8TFH8">
    <property type="interactions" value="239"/>
</dbReference>
<dbReference type="STRING" id="284812.Q8TFH8"/>
<dbReference type="iPTMnet" id="Q8TFH8"/>
<dbReference type="PaxDb" id="4896-SPAPB17E12.03.1"/>
<dbReference type="EnsemblFungi" id="SPAPB17E12.03.1">
    <property type="protein sequence ID" value="SPAPB17E12.03.1:pep"/>
    <property type="gene ID" value="SPAPB17E12.03"/>
</dbReference>
<dbReference type="PomBase" id="SPAPB17E12.03">
    <property type="gene designation" value="pex12"/>
</dbReference>
<dbReference type="VEuPathDB" id="FungiDB:SPAPB17E12.03"/>
<dbReference type="eggNOG" id="KOG0826">
    <property type="taxonomic scope" value="Eukaryota"/>
</dbReference>
<dbReference type="HOGENOM" id="CLU_031067_0_0_1"/>
<dbReference type="InParanoid" id="Q8TFH8"/>
<dbReference type="OMA" id="QHYLARC"/>
<dbReference type="PhylomeDB" id="Q8TFH8"/>
<dbReference type="Reactome" id="R-SPO-8866654">
    <property type="pathway name" value="E3 ubiquitin ligases ubiquitinate target proteins"/>
</dbReference>
<dbReference type="Reactome" id="R-SPO-9033241">
    <property type="pathway name" value="Peroxisomal protein import"/>
</dbReference>
<dbReference type="Reactome" id="R-SPO-9603798">
    <property type="pathway name" value="Class I peroxisomal membrane protein import"/>
</dbReference>
<dbReference type="UniPathway" id="UPA00143"/>
<dbReference type="PRO" id="PR:Q8TFH8"/>
<dbReference type="Proteomes" id="UP000002485">
    <property type="component" value="Chromosome I"/>
</dbReference>
<dbReference type="GO" id="GO:1990429">
    <property type="term" value="C:peroxisomal importomer complex"/>
    <property type="evidence" value="ECO:0000318"/>
    <property type="project" value="GO_Central"/>
</dbReference>
<dbReference type="GO" id="GO:0005778">
    <property type="term" value="C:peroxisomal membrane"/>
    <property type="evidence" value="ECO:0000318"/>
    <property type="project" value="GO_Central"/>
</dbReference>
<dbReference type="GO" id="GO:0061630">
    <property type="term" value="F:ubiquitin protein ligase activity"/>
    <property type="evidence" value="ECO:0000255"/>
    <property type="project" value="PomBase"/>
</dbReference>
<dbReference type="GO" id="GO:0004842">
    <property type="term" value="F:ubiquitin-protein transferase activity"/>
    <property type="evidence" value="ECO:0000318"/>
    <property type="project" value="GO_Central"/>
</dbReference>
<dbReference type="GO" id="GO:0008270">
    <property type="term" value="F:zinc ion binding"/>
    <property type="evidence" value="ECO:0000255"/>
    <property type="project" value="PomBase"/>
</dbReference>
<dbReference type="GO" id="GO:0016558">
    <property type="term" value="P:protein import into peroxisome matrix"/>
    <property type="evidence" value="ECO:0000318"/>
    <property type="project" value="GO_Central"/>
</dbReference>
<dbReference type="GO" id="GO:0016562">
    <property type="term" value="P:protein import into peroxisome matrix, receptor recycling"/>
    <property type="evidence" value="ECO:0007669"/>
    <property type="project" value="UniProtKB-ARBA"/>
</dbReference>
<dbReference type="GO" id="GO:0006513">
    <property type="term" value="P:protein monoubiquitination"/>
    <property type="evidence" value="ECO:0000318"/>
    <property type="project" value="GO_Central"/>
</dbReference>
<dbReference type="CDD" id="cd16451">
    <property type="entry name" value="mRING_PEX12"/>
    <property type="match status" value="1"/>
</dbReference>
<dbReference type="Gene3D" id="3.30.40.10">
    <property type="entry name" value="Zinc/RING finger domain, C3HC4 (zinc finger)"/>
    <property type="match status" value="1"/>
</dbReference>
<dbReference type="InterPro" id="IPR017375">
    <property type="entry name" value="PEX12"/>
</dbReference>
<dbReference type="InterPro" id="IPR006845">
    <property type="entry name" value="Pex_N"/>
</dbReference>
<dbReference type="InterPro" id="IPR013083">
    <property type="entry name" value="Znf_RING/FYVE/PHD"/>
</dbReference>
<dbReference type="PANTHER" id="PTHR12888:SF0">
    <property type="entry name" value="PEROXISOME ASSEMBLY PROTEIN 12"/>
    <property type="match status" value="1"/>
</dbReference>
<dbReference type="PANTHER" id="PTHR12888">
    <property type="entry name" value="PEROXISOME ASSEMBLY PROTEIN 12 PEROXIN-12"/>
    <property type="match status" value="1"/>
</dbReference>
<dbReference type="Pfam" id="PF04757">
    <property type="entry name" value="Pex2_Pex12"/>
    <property type="match status" value="1"/>
</dbReference>
<dbReference type="Pfam" id="PF13923">
    <property type="entry name" value="zf-C3HC4_2"/>
    <property type="match status" value="1"/>
</dbReference>
<dbReference type="SUPFAM" id="SSF57850">
    <property type="entry name" value="RING/U-box"/>
    <property type="match status" value="1"/>
</dbReference>
<keyword id="KW-0472">Membrane</keyword>
<keyword id="KW-0479">Metal-binding</keyword>
<keyword id="KW-0576">Peroxisome</keyword>
<keyword id="KW-0653">Protein transport</keyword>
<keyword id="KW-1185">Reference proteome</keyword>
<keyword id="KW-0812">Transmembrane</keyword>
<keyword id="KW-1133">Transmembrane helix</keyword>
<keyword id="KW-0813">Transport</keyword>
<keyword id="KW-0833">Ubl conjugation pathway</keyword>
<keyword id="KW-0862">Zinc</keyword>
<keyword id="KW-0863">Zinc-finger</keyword>